<name>FABZ_BACC0</name>
<dbReference type="EC" id="4.2.1.59" evidence="1"/>
<dbReference type="EMBL" id="CP001283">
    <property type="protein sequence ID" value="ACK92310.1"/>
    <property type="molecule type" value="Genomic_DNA"/>
</dbReference>
<dbReference type="RefSeq" id="WP_000884318.1">
    <property type="nucleotide sequence ID" value="NC_011773.1"/>
</dbReference>
<dbReference type="SMR" id="B7JGJ1"/>
<dbReference type="GeneID" id="93005856"/>
<dbReference type="KEGG" id="bcu:BCAH820_5357"/>
<dbReference type="HOGENOM" id="CLU_078912_3_0_9"/>
<dbReference type="Proteomes" id="UP000001363">
    <property type="component" value="Chromosome"/>
</dbReference>
<dbReference type="GO" id="GO:0005737">
    <property type="term" value="C:cytoplasm"/>
    <property type="evidence" value="ECO:0007669"/>
    <property type="project" value="UniProtKB-SubCell"/>
</dbReference>
<dbReference type="GO" id="GO:0016020">
    <property type="term" value="C:membrane"/>
    <property type="evidence" value="ECO:0007669"/>
    <property type="project" value="GOC"/>
</dbReference>
<dbReference type="GO" id="GO:0019171">
    <property type="term" value="F:(3R)-hydroxyacyl-[acyl-carrier-protein] dehydratase activity"/>
    <property type="evidence" value="ECO:0007669"/>
    <property type="project" value="UniProtKB-EC"/>
</dbReference>
<dbReference type="GO" id="GO:0006633">
    <property type="term" value="P:fatty acid biosynthetic process"/>
    <property type="evidence" value="ECO:0007669"/>
    <property type="project" value="UniProtKB-UniRule"/>
</dbReference>
<dbReference type="GO" id="GO:0009245">
    <property type="term" value="P:lipid A biosynthetic process"/>
    <property type="evidence" value="ECO:0007669"/>
    <property type="project" value="UniProtKB-UniRule"/>
</dbReference>
<dbReference type="CDD" id="cd01288">
    <property type="entry name" value="FabZ"/>
    <property type="match status" value="1"/>
</dbReference>
<dbReference type="FunFam" id="3.10.129.10:FF:000001">
    <property type="entry name" value="3-hydroxyacyl-[acyl-carrier-protein] dehydratase FabZ"/>
    <property type="match status" value="1"/>
</dbReference>
<dbReference type="Gene3D" id="3.10.129.10">
    <property type="entry name" value="Hotdog Thioesterase"/>
    <property type="match status" value="1"/>
</dbReference>
<dbReference type="HAMAP" id="MF_00406">
    <property type="entry name" value="FabZ"/>
    <property type="match status" value="1"/>
</dbReference>
<dbReference type="InterPro" id="IPR013114">
    <property type="entry name" value="FabA_FabZ"/>
</dbReference>
<dbReference type="InterPro" id="IPR010084">
    <property type="entry name" value="FabZ"/>
</dbReference>
<dbReference type="InterPro" id="IPR029069">
    <property type="entry name" value="HotDog_dom_sf"/>
</dbReference>
<dbReference type="NCBIfam" id="TIGR01750">
    <property type="entry name" value="fabZ"/>
    <property type="match status" value="1"/>
</dbReference>
<dbReference type="NCBIfam" id="NF000582">
    <property type="entry name" value="PRK00006.1"/>
    <property type="match status" value="1"/>
</dbReference>
<dbReference type="PANTHER" id="PTHR30272">
    <property type="entry name" value="3-HYDROXYACYL-[ACYL-CARRIER-PROTEIN] DEHYDRATASE"/>
    <property type="match status" value="1"/>
</dbReference>
<dbReference type="PANTHER" id="PTHR30272:SF1">
    <property type="entry name" value="3-HYDROXYACYL-[ACYL-CARRIER-PROTEIN] DEHYDRATASE"/>
    <property type="match status" value="1"/>
</dbReference>
<dbReference type="Pfam" id="PF07977">
    <property type="entry name" value="FabA"/>
    <property type="match status" value="1"/>
</dbReference>
<dbReference type="SUPFAM" id="SSF54637">
    <property type="entry name" value="Thioesterase/thiol ester dehydrase-isomerase"/>
    <property type="match status" value="1"/>
</dbReference>
<organism>
    <name type="scientific">Bacillus cereus (strain AH820)</name>
    <dbReference type="NCBI Taxonomy" id="405535"/>
    <lineage>
        <taxon>Bacteria</taxon>
        <taxon>Bacillati</taxon>
        <taxon>Bacillota</taxon>
        <taxon>Bacilli</taxon>
        <taxon>Bacillales</taxon>
        <taxon>Bacillaceae</taxon>
        <taxon>Bacillus</taxon>
        <taxon>Bacillus cereus group</taxon>
    </lineage>
</organism>
<feature type="chain" id="PRO_1000197275" description="3-hydroxyacyl-[acyl-carrier-protein] dehydratase FabZ">
    <location>
        <begin position="1"/>
        <end position="144"/>
    </location>
</feature>
<feature type="active site" evidence="1">
    <location>
        <position position="48"/>
    </location>
</feature>
<keyword id="KW-0963">Cytoplasm</keyword>
<keyword id="KW-0441">Lipid A biosynthesis</keyword>
<keyword id="KW-0444">Lipid biosynthesis</keyword>
<keyword id="KW-0443">Lipid metabolism</keyword>
<keyword id="KW-0456">Lyase</keyword>
<evidence type="ECO:0000255" key="1">
    <source>
        <dbReference type="HAMAP-Rule" id="MF_00406"/>
    </source>
</evidence>
<gene>
    <name evidence="1" type="primary">fabZ</name>
    <name type="ordered locus">BCAH820_5357</name>
</gene>
<comment type="function">
    <text evidence="1">Involved in unsaturated fatty acids biosynthesis. Catalyzes the dehydration of short chain beta-hydroxyacyl-ACPs and long chain saturated and unsaturated beta-hydroxyacyl-ACPs.</text>
</comment>
<comment type="catalytic activity">
    <reaction evidence="1">
        <text>a (3R)-hydroxyacyl-[ACP] = a (2E)-enoyl-[ACP] + H2O</text>
        <dbReference type="Rhea" id="RHEA:13097"/>
        <dbReference type="Rhea" id="RHEA-COMP:9925"/>
        <dbReference type="Rhea" id="RHEA-COMP:9945"/>
        <dbReference type="ChEBI" id="CHEBI:15377"/>
        <dbReference type="ChEBI" id="CHEBI:78784"/>
        <dbReference type="ChEBI" id="CHEBI:78827"/>
        <dbReference type="EC" id="4.2.1.59"/>
    </reaction>
</comment>
<comment type="subcellular location">
    <subcellularLocation>
        <location evidence="1">Cytoplasm</location>
    </subcellularLocation>
</comment>
<comment type="similarity">
    <text evidence="1">Belongs to the thioester dehydratase family. FabZ subfamily.</text>
</comment>
<accession>B7JGJ1</accession>
<protein>
    <recommendedName>
        <fullName evidence="1">3-hydroxyacyl-[acyl-carrier-protein] dehydratase FabZ</fullName>
        <ecNumber evidence="1">4.2.1.59</ecNumber>
    </recommendedName>
    <alternativeName>
        <fullName evidence="1">(3R)-hydroxymyristoyl-[acyl-carrier-protein] dehydratase</fullName>
        <shortName evidence="1">(3R)-hydroxymyristoyl-ACP dehydrase</shortName>
    </alternativeName>
    <alternativeName>
        <fullName evidence="1">Beta-hydroxyacyl-ACP dehydratase</fullName>
    </alternativeName>
</protein>
<proteinExistence type="inferred from homology"/>
<reference key="1">
    <citation type="submission" date="2008-10" db="EMBL/GenBank/DDBJ databases">
        <title>Genome sequence of Bacillus cereus AH820.</title>
        <authorList>
            <person name="Dodson R.J."/>
            <person name="Durkin A.S."/>
            <person name="Rosovitz M.J."/>
            <person name="Rasko D.A."/>
            <person name="Hoffmaster A."/>
            <person name="Ravel J."/>
            <person name="Sutton G."/>
        </authorList>
    </citation>
    <scope>NUCLEOTIDE SEQUENCE [LARGE SCALE GENOMIC DNA]</scope>
    <source>
        <strain>AH820</strain>
    </source>
</reference>
<sequence>MLDIQQIKEIIPHRYPFLLVDKVLEVEEGKRAIGIKNVTANEEFFNGHFPDYPVMPGVLIVEALAQVGAVAMLKKEENRGRLAFFAGIDNCRFKRQVRPGDQLRLEVEMTRVRGAIGKGKAIATVDGEIACETEITFALGDKKE</sequence>